<feature type="chain" id="PRO_0000372346" description="Protein dip1">
    <location>
        <begin position="1"/>
        <end position="374"/>
    </location>
</feature>
<dbReference type="EMBL" id="CU329671">
    <property type="protein sequence ID" value="CAA21154.2"/>
    <property type="molecule type" value="Genomic_DNA"/>
</dbReference>
<dbReference type="PIR" id="T39974">
    <property type="entry name" value="T39974"/>
</dbReference>
<dbReference type="RefSeq" id="NP_595964.1">
    <property type="nucleotide sequence ID" value="NM_001021873.2"/>
</dbReference>
<dbReference type="PDB" id="6W17">
    <property type="method" value="EM"/>
    <property type="resolution" value="3.90 A"/>
    <property type="chains" value="H=1-374"/>
</dbReference>
<dbReference type="PDBsum" id="6W17"/>
<dbReference type="EMDB" id="EMD-21502"/>
<dbReference type="SMR" id="O74771"/>
<dbReference type="BioGRID" id="277032">
    <property type="interactions" value="19"/>
</dbReference>
<dbReference type="FunCoup" id="O74771">
    <property type="interactions" value="13"/>
</dbReference>
<dbReference type="STRING" id="284812.O74771"/>
<dbReference type="PaxDb" id="4896-SPBC24C6.10c.1"/>
<dbReference type="EnsemblFungi" id="SPBC24C6.10c.1">
    <property type="protein sequence ID" value="SPBC24C6.10c.1:pep"/>
    <property type="gene ID" value="SPBC24C6.10c"/>
</dbReference>
<dbReference type="PomBase" id="SPBC24C6.10c">
    <property type="gene designation" value="dip1"/>
</dbReference>
<dbReference type="VEuPathDB" id="FungiDB:SPBC24C6.10c"/>
<dbReference type="eggNOG" id="KOG4035">
    <property type="taxonomic scope" value="Eukaryota"/>
</dbReference>
<dbReference type="HOGENOM" id="CLU_017272_0_1_1"/>
<dbReference type="InParanoid" id="O74771"/>
<dbReference type="OMA" id="FMEDIHI"/>
<dbReference type="PhylomeDB" id="O74771"/>
<dbReference type="PRO" id="PR:O74771"/>
<dbReference type="Proteomes" id="UP000002485">
    <property type="component" value="Chromosome II"/>
</dbReference>
<dbReference type="GO" id="GO:0030479">
    <property type="term" value="C:actin cortical patch"/>
    <property type="evidence" value="ECO:0000314"/>
    <property type="project" value="PomBase"/>
</dbReference>
<dbReference type="GO" id="GO:0032153">
    <property type="term" value="C:cell division site"/>
    <property type="evidence" value="ECO:0007005"/>
    <property type="project" value="PomBase"/>
</dbReference>
<dbReference type="GO" id="GO:0051286">
    <property type="term" value="C:cell tip"/>
    <property type="evidence" value="ECO:0007005"/>
    <property type="project" value="PomBase"/>
</dbReference>
<dbReference type="GO" id="GO:0043332">
    <property type="term" value="C:mating projection tip"/>
    <property type="evidence" value="ECO:0000314"/>
    <property type="project" value="PomBase"/>
</dbReference>
<dbReference type="GO" id="GO:0005634">
    <property type="term" value="C:nucleus"/>
    <property type="evidence" value="ECO:0007669"/>
    <property type="project" value="UniProtKB-SubCell"/>
</dbReference>
<dbReference type="GO" id="GO:0071933">
    <property type="term" value="F:Arp2/3 complex binding"/>
    <property type="evidence" value="ECO:0000314"/>
    <property type="project" value="PomBase"/>
</dbReference>
<dbReference type="GO" id="GO:0000147">
    <property type="term" value="P:actin cortical patch assembly"/>
    <property type="evidence" value="ECO:0000315"/>
    <property type="project" value="PomBase"/>
</dbReference>
<dbReference type="GO" id="GO:0051666">
    <property type="term" value="P:actin cortical patch localization"/>
    <property type="evidence" value="ECO:0000315"/>
    <property type="project" value="PomBase"/>
</dbReference>
<dbReference type="GO" id="GO:0034314">
    <property type="term" value="P:Arp2/3 complex-mediated actin nucleation"/>
    <property type="evidence" value="ECO:0000269"/>
    <property type="project" value="PomBase"/>
</dbReference>
<dbReference type="GO" id="GO:0006897">
    <property type="term" value="P:endocytosis"/>
    <property type="evidence" value="ECO:0000315"/>
    <property type="project" value="PomBase"/>
</dbReference>
<dbReference type="GO" id="GO:0044379">
    <property type="term" value="P:protein localization to actin cortical patch"/>
    <property type="evidence" value="ECO:0000315"/>
    <property type="project" value="PomBase"/>
</dbReference>
<dbReference type="InterPro" id="IPR030125">
    <property type="entry name" value="SPIN90/Ldb17"/>
</dbReference>
<dbReference type="InterPro" id="IPR018556">
    <property type="entry name" value="SPIN90/Ldb17_LRD"/>
</dbReference>
<dbReference type="PANTHER" id="PTHR13357:SF1">
    <property type="entry name" value="NCK-INTERACTING PROTEIN WITH SH3 DOMAIN"/>
    <property type="match status" value="1"/>
</dbReference>
<dbReference type="PANTHER" id="PTHR13357">
    <property type="entry name" value="SH3 ADAPTER PROTEIN SPIN90 NCK INTERACTING PROTEIN WITH SH3 DOMAIN"/>
    <property type="match status" value="1"/>
</dbReference>
<dbReference type="Pfam" id="PF09431">
    <property type="entry name" value="SPIN90_LRD"/>
    <property type="match status" value="1"/>
</dbReference>
<organism>
    <name type="scientific">Schizosaccharomyces pombe (strain 972 / ATCC 24843)</name>
    <name type="common">Fission yeast</name>
    <dbReference type="NCBI Taxonomy" id="284812"/>
    <lineage>
        <taxon>Eukaryota</taxon>
        <taxon>Fungi</taxon>
        <taxon>Dikarya</taxon>
        <taxon>Ascomycota</taxon>
        <taxon>Taphrinomycotina</taxon>
        <taxon>Schizosaccharomycetes</taxon>
        <taxon>Schizosaccharomycetales</taxon>
        <taxon>Schizosaccharomycetaceae</taxon>
        <taxon>Schizosaccharomyces</taxon>
    </lineage>
</organism>
<reference key="1">
    <citation type="journal article" date="2002" name="Nature">
        <title>The genome sequence of Schizosaccharomyces pombe.</title>
        <authorList>
            <person name="Wood V."/>
            <person name="Gwilliam R."/>
            <person name="Rajandream M.A."/>
            <person name="Lyne M.H."/>
            <person name="Lyne R."/>
            <person name="Stewart A."/>
            <person name="Sgouros J.G."/>
            <person name="Peat N."/>
            <person name="Hayles J."/>
            <person name="Baker S.G."/>
            <person name="Basham D."/>
            <person name="Bowman S."/>
            <person name="Brooks K."/>
            <person name="Brown D."/>
            <person name="Brown S."/>
            <person name="Chillingworth T."/>
            <person name="Churcher C.M."/>
            <person name="Collins M."/>
            <person name="Connor R."/>
            <person name="Cronin A."/>
            <person name="Davis P."/>
            <person name="Feltwell T."/>
            <person name="Fraser A."/>
            <person name="Gentles S."/>
            <person name="Goble A."/>
            <person name="Hamlin N."/>
            <person name="Harris D.E."/>
            <person name="Hidalgo J."/>
            <person name="Hodgson G."/>
            <person name="Holroyd S."/>
            <person name="Hornsby T."/>
            <person name="Howarth S."/>
            <person name="Huckle E.J."/>
            <person name="Hunt S."/>
            <person name="Jagels K."/>
            <person name="James K.D."/>
            <person name="Jones L."/>
            <person name="Jones M."/>
            <person name="Leather S."/>
            <person name="McDonald S."/>
            <person name="McLean J."/>
            <person name="Mooney P."/>
            <person name="Moule S."/>
            <person name="Mungall K.L."/>
            <person name="Murphy L.D."/>
            <person name="Niblett D."/>
            <person name="Odell C."/>
            <person name="Oliver K."/>
            <person name="O'Neil S."/>
            <person name="Pearson D."/>
            <person name="Quail M.A."/>
            <person name="Rabbinowitsch E."/>
            <person name="Rutherford K.M."/>
            <person name="Rutter S."/>
            <person name="Saunders D."/>
            <person name="Seeger K."/>
            <person name="Sharp S."/>
            <person name="Skelton J."/>
            <person name="Simmonds M.N."/>
            <person name="Squares R."/>
            <person name="Squares S."/>
            <person name="Stevens K."/>
            <person name="Taylor K."/>
            <person name="Taylor R.G."/>
            <person name="Tivey A."/>
            <person name="Walsh S.V."/>
            <person name="Warren T."/>
            <person name="Whitehead S."/>
            <person name="Woodward J.R."/>
            <person name="Volckaert G."/>
            <person name="Aert R."/>
            <person name="Robben J."/>
            <person name="Grymonprez B."/>
            <person name="Weltjens I."/>
            <person name="Vanstreels E."/>
            <person name="Rieger M."/>
            <person name="Schaefer M."/>
            <person name="Mueller-Auer S."/>
            <person name="Gabel C."/>
            <person name="Fuchs M."/>
            <person name="Duesterhoeft A."/>
            <person name="Fritzc C."/>
            <person name="Holzer E."/>
            <person name="Moestl D."/>
            <person name="Hilbert H."/>
            <person name="Borzym K."/>
            <person name="Langer I."/>
            <person name="Beck A."/>
            <person name="Lehrach H."/>
            <person name="Reinhardt R."/>
            <person name="Pohl T.M."/>
            <person name="Eger P."/>
            <person name="Zimmermann W."/>
            <person name="Wedler H."/>
            <person name="Wambutt R."/>
            <person name="Purnelle B."/>
            <person name="Goffeau A."/>
            <person name="Cadieu E."/>
            <person name="Dreano S."/>
            <person name="Gloux S."/>
            <person name="Lelaure V."/>
            <person name="Mottier S."/>
            <person name="Galibert F."/>
            <person name="Aves S.J."/>
            <person name="Xiang Z."/>
            <person name="Hunt C."/>
            <person name="Moore K."/>
            <person name="Hurst S.M."/>
            <person name="Lucas M."/>
            <person name="Rochet M."/>
            <person name="Gaillardin C."/>
            <person name="Tallada V.A."/>
            <person name="Garzon A."/>
            <person name="Thode G."/>
            <person name="Daga R.R."/>
            <person name="Cruzado L."/>
            <person name="Jimenez J."/>
            <person name="Sanchez M."/>
            <person name="del Rey F."/>
            <person name="Benito J."/>
            <person name="Dominguez A."/>
            <person name="Revuelta J.L."/>
            <person name="Moreno S."/>
            <person name="Armstrong J."/>
            <person name="Forsburg S.L."/>
            <person name="Cerutti L."/>
            <person name="Lowe T."/>
            <person name="McCombie W.R."/>
            <person name="Paulsen I."/>
            <person name="Potashkin J."/>
            <person name="Shpakovski G.V."/>
            <person name="Ussery D."/>
            <person name="Barrell B.G."/>
            <person name="Nurse P."/>
        </authorList>
    </citation>
    <scope>NUCLEOTIDE SEQUENCE [LARGE SCALE GENOMIC DNA]</scope>
    <source>
        <strain>972 / ATCC 24843</strain>
    </source>
</reference>
<reference key="2">
    <citation type="journal article" date="2006" name="Nat. Biotechnol.">
        <title>ORFeome cloning and global analysis of protein localization in the fission yeast Schizosaccharomyces pombe.</title>
        <authorList>
            <person name="Matsuyama A."/>
            <person name="Arai R."/>
            <person name="Yashiroda Y."/>
            <person name="Shirai A."/>
            <person name="Kamata A."/>
            <person name="Sekido S."/>
            <person name="Kobayashi Y."/>
            <person name="Hashimoto A."/>
            <person name="Hamamoto M."/>
            <person name="Hiraoka Y."/>
            <person name="Horinouchi S."/>
            <person name="Yoshida M."/>
        </authorList>
    </citation>
    <scope>SUBCELLULAR LOCATION [LARGE SCALE ANALYSIS]</scope>
</reference>
<accession>O74771</accession>
<evidence type="ECO:0000250" key="1"/>
<evidence type="ECO:0000269" key="2">
    <source>
    </source>
</evidence>
<evidence type="ECO:0000305" key="3"/>
<proteinExistence type="evidence at protein level"/>
<sequence length="374" mass="43677">MEFTDVFYNLENEKQFLAEIDELLTIPYEKNELEIGVSKFLSFINKYGEPYLITEFQLQRCMEKFLNSPLYQLDENAVLSIFYDCFFFLKEQQTLKFIIIVFQSEIQENEYCLRLLASTGFIPVLIKAMKQFKDRSENVAFTSFRYALFLVYYICRSRRLSPTDLVAIDEYFLVNLFKTSEEAWNDEDMDSFGMCVLTLLSINEQFMLVRLASKGSFEIANGIMDLLSSSKVDNGIYSEGLVFTLNREKDPRSRMLILKQLFLLFTTPATYEIFYTNDLNVLIDIFIREINNIPDELSDLRYAYLQVLIPLLENTQVRHPPHYKTKCIVDAVNNVLISHSKSSNMEDARTTDVAIRVLEVPWLQQEMKSLGTAQ</sequence>
<gene>
    <name type="primary">dip1</name>
    <name type="ORF">SPBC24C6.10c</name>
</gene>
<comment type="function">
    <text evidence="1">May be involved in protein-linked oligosaccharide phosphorylation.</text>
</comment>
<comment type="subcellular location">
    <subcellularLocation>
        <location evidence="2">Cytoplasm</location>
    </subcellularLocation>
    <subcellularLocation>
        <location evidence="2">Nucleus</location>
    </subcellularLocation>
    <subcellularLocation>
        <location evidence="2">Cell tip</location>
    </subcellularLocation>
</comment>
<comment type="similarity">
    <text evidence="3">Belongs to the LDB17 family.</text>
</comment>
<keyword id="KW-0002">3D-structure</keyword>
<keyword id="KW-0963">Cytoplasm</keyword>
<keyword id="KW-0539">Nucleus</keyword>
<keyword id="KW-1185">Reference proteome</keyword>
<name>DIP1_SCHPO</name>
<protein>
    <recommendedName>
        <fullName>Protein dip1</fullName>
    </recommendedName>
</protein>